<proteinExistence type="inferred from homology"/>
<keyword id="KW-0028">Amino-acid biosynthesis</keyword>
<keyword id="KW-0032">Aminotransferase</keyword>
<keyword id="KW-0368">Histidine biosynthesis</keyword>
<keyword id="KW-0663">Pyridoxal phosphate</keyword>
<keyword id="KW-0808">Transferase</keyword>
<dbReference type="EC" id="2.6.1.9" evidence="1"/>
<dbReference type="EMBL" id="CP001099">
    <property type="protein sequence ID" value="ACF11664.1"/>
    <property type="molecule type" value="Genomic_DNA"/>
</dbReference>
<dbReference type="RefSeq" id="WP_012502497.1">
    <property type="nucleotide sequence ID" value="NC_011027.1"/>
</dbReference>
<dbReference type="SMR" id="B3QP11"/>
<dbReference type="STRING" id="517417.Cpar_1261"/>
<dbReference type="KEGG" id="cpc:Cpar_1261"/>
<dbReference type="eggNOG" id="COG0079">
    <property type="taxonomic scope" value="Bacteria"/>
</dbReference>
<dbReference type="HOGENOM" id="CLU_017584_3_1_10"/>
<dbReference type="UniPathway" id="UPA00031">
    <property type="reaction ID" value="UER00012"/>
</dbReference>
<dbReference type="Proteomes" id="UP000008811">
    <property type="component" value="Chromosome"/>
</dbReference>
<dbReference type="GO" id="GO:0004400">
    <property type="term" value="F:histidinol-phosphate transaminase activity"/>
    <property type="evidence" value="ECO:0007669"/>
    <property type="project" value="UniProtKB-UniRule"/>
</dbReference>
<dbReference type="GO" id="GO:0030170">
    <property type="term" value="F:pyridoxal phosphate binding"/>
    <property type="evidence" value="ECO:0007669"/>
    <property type="project" value="InterPro"/>
</dbReference>
<dbReference type="GO" id="GO:0000105">
    <property type="term" value="P:L-histidine biosynthetic process"/>
    <property type="evidence" value="ECO:0007669"/>
    <property type="project" value="UniProtKB-UniRule"/>
</dbReference>
<dbReference type="CDD" id="cd00609">
    <property type="entry name" value="AAT_like"/>
    <property type="match status" value="1"/>
</dbReference>
<dbReference type="Gene3D" id="3.90.1150.10">
    <property type="entry name" value="Aspartate Aminotransferase, domain 1"/>
    <property type="match status" value="1"/>
</dbReference>
<dbReference type="Gene3D" id="3.40.640.10">
    <property type="entry name" value="Type I PLP-dependent aspartate aminotransferase-like (Major domain)"/>
    <property type="match status" value="1"/>
</dbReference>
<dbReference type="HAMAP" id="MF_01023">
    <property type="entry name" value="HisC_aminotrans_2"/>
    <property type="match status" value="1"/>
</dbReference>
<dbReference type="InterPro" id="IPR001917">
    <property type="entry name" value="Aminotrans_II_pyridoxalP_BS"/>
</dbReference>
<dbReference type="InterPro" id="IPR004839">
    <property type="entry name" value="Aminotransferase_I/II_large"/>
</dbReference>
<dbReference type="InterPro" id="IPR005861">
    <property type="entry name" value="HisP_aminotrans"/>
</dbReference>
<dbReference type="InterPro" id="IPR050106">
    <property type="entry name" value="HistidinolP_aminotransfase"/>
</dbReference>
<dbReference type="InterPro" id="IPR015424">
    <property type="entry name" value="PyrdxlP-dep_Trfase"/>
</dbReference>
<dbReference type="InterPro" id="IPR015421">
    <property type="entry name" value="PyrdxlP-dep_Trfase_major"/>
</dbReference>
<dbReference type="InterPro" id="IPR015422">
    <property type="entry name" value="PyrdxlP-dep_Trfase_small"/>
</dbReference>
<dbReference type="NCBIfam" id="TIGR01141">
    <property type="entry name" value="hisC"/>
    <property type="match status" value="1"/>
</dbReference>
<dbReference type="PANTHER" id="PTHR43643:SF6">
    <property type="entry name" value="HISTIDINOL-PHOSPHATE AMINOTRANSFERASE"/>
    <property type="match status" value="1"/>
</dbReference>
<dbReference type="PANTHER" id="PTHR43643">
    <property type="entry name" value="HISTIDINOL-PHOSPHATE AMINOTRANSFERASE 2"/>
    <property type="match status" value="1"/>
</dbReference>
<dbReference type="Pfam" id="PF00155">
    <property type="entry name" value="Aminotran_1_2"/>
    <property type="match status" value="1"/>
</dbReference>
<dbReference type="SUPFAM" id="SSF53383">
    <property type="entry name" value="PLP-dependent transferases"/>
    <property type="match status" value="1"/>
</dbReference>
<dbReference type="PROSITE" id="PS00599">
    <property type="entry name" value="AA_TRANSFER_CLASS_2"/>
    <property type="match status" value="1"/>
</dbReference>
<sequence>MKRDFRALLNPALERIEAYKVEGGQDAEVKLNQNESPFDLPMWLKDKILDEFRREPWNRYPDILPYRGMATYASFLGVPAESVIMSNGSNEMLYTIFMACVGAGRKVLIPEPSFSLYDKLAVLLQGEIVSVPLNPDLSFDVDAIIAAAEREKVDFIVLSTPNNPAGKSMSHDEVERIVSTCDAIVLADEAYIEFSQQESVVDLIDRYPNLIVLRTMSKALALAGMRIGFAITNPELMAEITKPKIPFASGRLAEITLANVLENYSLVTDAVHYILAERQRMEQELAGIAGVEVFESDTNFLIIRVGNAKEVFTKLREGGVLVRNVSGYPLMQNCLRCNIGLIEENDRLLELLKSC</sequence>
<evidence type="ECO:0000255" key="1">
    <source>
        <dbReference type="HAMAP-Rule" id="MF_01023"/>
    </source>
</evidence>
<reference key="1">
    <citation type="submission" date="2008-06" db="EMBL/GenBank/DDBJ databases">
        <title>Complete sequence of Chlorobaculum parvum NCIB 8327.</title>
        <authorList>
            <consortium name="US DOE Joint Genome Institute"/>
            <person name="Lucas S."/>
            <person name="Copeland A."/>
            <person name="Lapidus A."/>
            <person name="Glavina del Rio T."/>
            <person name="Dalin E."/>
            <person name="Tice H."/>
            <person name="Bruce D."/>
            <person name="Goodwin L."/>
            <person name="Pitluck S."/>
            <person name="Schmutz J."/>
            <person name="Larimer F."/>
            <person name="Land M."/>
            <person name="Hauser L."/>
            <person name="Kyrpides N."/>
            <person name="Mikhailova N."/>
            <person name="Zhao F."/>
            <person name="Li T."/>
            <person name="Liu Z."/>
            <person name="Overmann J."/>
            <person name="Bryant D.A."/>
            <person name="Richardson P."/>
        </authorList>
    </citation>
    <scope>NUCLEOTIDE SEQUENCE [LARGE SCALE GENOMIC DNA]</scope>
    <source>
        <strain>DSM 263 / NCIMB 8327</strain>
    </source>
</reference>
<gene>
    <name evidence="1" type="primary">hisC</name>
    <name type="ordered locus">Cpar_1261</name>
</gene>
<accession>B3QP11</accession>
<organism>
    <name type="scientific">Chlorobaculum parvum (strain DSM 263 / NCIMB 8327)</name>
    <name type="common">Chlorobium vibrioforme subsp. thiosulfatophilum</name>
    <dbReference type="NCBI Taxonomy" id="517417"/>
    <lineage>
        <taxon>Bacteria</taxon>
        <taxon>Pseudomonadati</taxon>
        <taxon>Chlorobiota</taxon>
        <taxon>Chlorobiia</taxon>
        <taxon>Chlorobiales</taxon>
        <taxon>Chlorobiaceae</taxon>
        <taxon>Chlorobaculum</taxon>
    </lineage>
</organism>
<comment type="catalytic activity">
    <reaction evidence="1">
        <text>L-histidinol phosphate + 2-oxoglutarate = 3-(imidazol-4-yl)-2-oxopropyl phosphate + L-glutamate</text>
        <dbReference type="Rhea" id="RHEA:23744"/>
        <dbReference type="ChEBI" id="CHEBI:16810"/>
        <dbReference type="ChEBI" id="CHEBI:29985"/>
        <dbReference type="ChEBI" id="CHEBI:57766"/>
        <dbReference type="ChEBI" id="CHEBI:57980"/>
        <dbReference type="EC" id="2.6.1.9"/>
    </reaction>
</comment>
<comment type="cofactor">
    <cofactor evidence="1">
        <name>pyridoxal 5'-phosphate</name>
        <dbReference type="ChEBI" id="CHEBI:597326"/>
    </cofactor>
</comment>
<comment type="pathway">
    <text evidence="1">Amino-acid biosynthesis; L-histidine biosynthesis; L-histidine from 5-phospho-alpha-D-ribose 1-diphosphate: step 7/9.</text>
</comment>
<comment type="subunit">
    <text evidence="1">Homodimer.</text>
</comment>
<comment type="similarity">
    <text evidence="1">Belongs to the class-II pyridoxal-phosphate-dependent aminotransferase family. Histidinol-phosphate aminotransferase subfamily.</text>
</comment>
<feature type="chain" id="PRO_1000135388" description="Histidinol-phosphate aminotransferase">
    <location>
        <begin position="1"/>
        <end position="355"/>
    </location>
</feature>
<feature type="modified residue" description="N6-(pyridoxal phosphate)lysine" evidence="1">
    <location>
        <position position="218"/>
    </location>
</feature>
<name>HIS8_CHLP8</name>
<protein>
    <recommendedName>
        <fullName evidence="1">Histidinol-phosphate aminotransferase</fullName>
        <ecNumber evidence="1">2.6.1.9</ecNumber>
    </recommendedName>
    <alternativeName>
        <fullName evidence="1">Imidazole acetol-phosphate transaminase</fullName>
    </alternativeName>
</protein>